<dbReference type="EMBL" id="KJ412281">
    <property type="protein sequence ID" value="AHX39324.1"/>
    <property type="molecule type" value="Genomic_DNA"/>
</dbReference>
<dbReference type="PIR" id="S69296">
    <property type="entry name" value="S69296"/>
</dbReference>
<dbReference type="SMR" id="A0A023PXG7"/>
<dbReference type="STRING" id="4932.YLR230W"/>
<dbReference type="PaxDb" id="4932-YLR230W"/>
<dbReference type="EnsemblFungi" id="YLR230W_mRNA">
    <property type="protein sequence ID" value="YLR230W"/>
    <property type="gene ID" value="YLR230W"/>
</dbReference>
<dbReference type="AGR" id="SGD:S000004220"/>
<dbReference type="SGD" id="S000004220">
    <property type="gene designation" value="YLR230W"/>
</dbReference>
<dbReference type="HOGENOM" id="CLU_2293877_0_0_1"/>
<dbReference type="GO" id="GO:0016020">
    <property type="term" value="C:membrane"/>
    <property type="evidence" value="ECO:0007669"/>
    <property type="project" value="UniProtKB-SubCell"/>
</dbReference>
<keyword id="KW-0472">Membrane</keyword>
<keyword id="KW-0812">Transmembrane</keyword>
<keyword id="KW-1133">Transmembrane helix</keyword>
<proteinExistence type="uncertain"/>
<reference key="1">
    <citation type="journal article" date="1997" name="Nature">
        <title>The nucleotide sequence of Saccharomyces cerevisiae chromosome XII.</title>
        <authorList>
            <person name="Johnston M."/>
            <person name="Hillier L.W."/>
            <person name="Riles L."/>
            <person name="Albermann K."/>
            <person name="Andre B."/>
            <person name="Ansorge W."/>
            <person name="Benes V."/>
            <person name="Brueckner M."/>
            <person name="Delius H."/>
            <person name="Dubois E."/>
            <person name="Duesterhoeft A."/>
            <person name="Entian K.-D."/>
            <person name="Floeth M."/>
            <person name="Goffeau A."/>
            <person name="Hebling U."/>
            <person name="Heumann K."/>
            <person name="Heuss-Neitzel D."/>
            <person name="Hilbert H."/>
            <person name="Hilger F."/>
            <person name="Kleine K."/>
            <person name="Koetter P."/>
            <person name="Louis E.J."/>
            <person name="Messenguy F."/>
            <person name="Mewes H.-W."/>
            <person name="Miosga T."/>
            <person name="Moestl D."/>
            <person name="Mueller-Auer S."/>
            <person name="Nentwich U."/>
            <person name="Obermaier B."/>
            <person name="Piravandi E."/>
            <person name="Pohl T.M."/>
            <person name="Portetelle D."/>
            <person name="Purnelle B."/>
            <person name="Rechmann S."/>
            <person name="Rieger M."/>
            <person name="Rinke M."/>
            <person name="Rose M."/>
            <person name="Scharfe M."/>
            <person name="Scherens B."/>
            <person name="Scholler P."/>
            <person name="Schwager C."/>
            <person name="Schwarz S."/>
            <person name="Underwood A.P."/>
            <person name="Urrestarazu L.A."/>
            <person name="Vandenbol M."/>
            <person name="Verhasselt P."/>
            <person name="Vierendeels F."/>
            <person name="Voet M."/>
            <person name="Volckaert G."/>
            <person name="Voss H."/>
            <person name="Wambutt R."/>
            <person name="Wedler E."/>
            <person name="Wedler H."/>
            <person name="Zimmermann F.K."/>
            <person name="Zollner A."/>
            <person name="Hani J."/>
            <person name="Hoheisel J.D."/>
        </authorList>
    </citation>
    <scope>NUCLEOTIDE SEQUENCE [LARGE SCALE GENOMIC DNA]</scope>
    <source>
        <strain>ATCC 204508 / S288c</strain>
    </source>
</reference>
<reference key="2">
    <citation type="journal article" date="2014" name="G3 (Bethesda)">
        <title>The reference genome sequence of Saccharomyces cerevisiae: Then and now.</title>
        <authorList>
            <person name="Engel S.R."/>
            <person name="Dietrich F.S."/>
            <person name="Fisk D.G."/>
            <person name="Binkley G."/>
            <person name="Balakrishnan R."/>
            <person name="Costanzo M.C."/>
            <person name="Dwight S.S."/>
            <person name="Hitz B.C."/>
            <person name="Karra K."/>
            <person name="Nash R.S."/>
            <person name="Weng S."/>
            <person name="Wong E.D."/>
            <person name="Lloyd P."/>
            <person name="Skrzypek M.S."/>
            <person name="Miyasato S.R."/>
            <person name="Simison M."/>
            <person name="Cherry J.M."/>
        </authorList>
    </citation>
    <scope>GENOME REANNOTATION</scope>
    <source>
        <strain>ATCC 204508 / S288c</strain>
    </source>
</reference>
<organism>
    <name type="scientific">Saccharomyces cerevisiae (strain ATCC 204508 / S288c)</name>
    <name type="common">Baker's yeast</name>
    <dbReference type="NCBI Taxonomy" id="559292"/>
    <lineage>
        <taxon>Eukaryota</taxon>
        <taxon>Fungi</taxon>
        <taxon>Dikarya</taxon>
        <taxon>Ascomycota</taxon>
        <taxon>Saccharomycotina</taxon>
        <taxon>Saccharomycetes</taxon>
        <taxon>Saccharomycetales</taxon>
        <taxon>Saccharomycetaceae</taxon>
        <taxon>Saccharomyces</taxon>
    </lineage>
</organism>
<feature type="chain" id="PRO_0000431044" description="Putative uncharacterized membrane protein YLR230W">
    <location>
        <begin position="1"/>
        <end position="101"/>
    </location>
</feature>
<feature type="transmembrane region" description="Helical" evidence="1">
    <location>
        <begin position="68"/>
        <end position="90"/>
    </location>
</feature>
<name>YL230_YEAST</name>
<protein>
    <recommendedName>
        <fullName evidence="2">Putative uncharacterized membrane protein YLR230W</fullName>
    </recommendedName>
</protein>
<gene>
    <name evidence="4" type="ordered locus">YLR230W</name>
</gene>
<accession>A0A023PXG7</accession>
<comment type="subcellular location">
    <subcellularLocation>
        <location evidence="1">Membrane</location>
        <topology evidence="1">Single-pass membrane protein</topology>
    </subcellularLocation>
</comment>
<comment type="miscellaneous">
    <text evidence="2">Partially overlaps CDC42.</text>
</comment>
<comment type="caution">
    <text evidence="3">Product of a dubious gene prediction unlikely to encode a functional protein. Because of that it is not part of the S.cerevisiae S288c complete/reference proteome set.</text>
</comment>
<evidence type="ECO:0000255" key="1"/>
<evidence type="ECO:0000305" key="2"/>
<evidence type="ECO:0000305" key="3">
    <source>
    </source>
</evidence>
<evidence type="ECO:0000312" key="4">
    <source>
        <dbReference type="SGD" id="S000004220"/>
    </source>
</evidence>
<sequence>MTRVSIDRNLLDRPYQTNLTYMVHHQSSQSPHSYRTLLEHSRLEIDSLYRRLEGTFSQQHHHRQQHTLAFAFCGRANTFISCFISFASLIRLLTYLLRKIE</sequence>